<organism>
    <name type="scientific">Prochlorococcus marinus (strain AS9601)</name>
    <dbReference type="NCBI Taxonomy" id="146891"/>
    <lineage>
        <taxon>Bacteria</taxon>
        <taxon>Bacillati</taxon>
        <taxon>Cyanobacteriota</taxon>
        <taxon>Cyanophyceae</taxon>
        <taxon>Synechococcales</taxon>
        <taxon>Prochlorococcaceae</taxon>
        <taxon>Prochlorococcus</taxon>
    </lineage>
</organism>
<proteinExistence type="inferred from homology"/>
<comment type="function">
    <text evidence="1">Located on the platform of the 30S subunit, it bridges several disparate RNA helices of the 16S rRNA. Forms part of the Shine-Dalgarno cleft in the 70S ribosome.</text>
</comment>
<comment type="subunit">
    <text evidence="1">Part of the 30S ribosomal subunit. Interacts with proteins S7 and S18. Binds to IF-3.</text>
</comment>
<comment type="similarity">
    <text evidence="1">Belongs to the universal ribosomal protein uS11 family.</text>
</comment>
<sequence length="130" mass="13811">MAATVKKTGSKKSKRNVPNGVVHIQSTFNNTIVSITDTSGHVISWSSAGASGFKGARKGTPFAAQTAAEAAARRALDQGMRQIEVLVRGPGAGRETAIRALQVAGLEITLIRDVTPLPHNGCRRPKRRRV</sequence>
<feature type="chain" id="PRO_0000294820" description="Small ribosomal subunit protein uS11">
    <location>
        <begin position="1"/>
        <end position="130"/>
    </location>
</feature>
<protein>
    <recommendedName>
        <fullName evidence="1">Small ribosomal subunit protein uS11</fullName>
    </recommendedName>
    <alternativeName>
        <fullName evidence="2">30S ribosomal protein S11</fullName>
    </alternativeName>
</protein>
<reference key="1">
    <citation type="journal article" date="2007" name="PLoS Genet.">
        <title>Patterns and implications of gene gain and loss in the evolution of Prochlorococcus.</title>
        <authorList>
            <person name="Kettler G.C."/>
            <person name="Martiny A.C."/>
            <person name="Huang K."/>
            <person name="Zucker J."/>
            <person name="Coleman M.L."/>
            <person name="Rodrigue S."/>
            <person name="Chen F."/>
            <person name="Lapidus A."/>
            <person name="Ferriera S."/>
            <person name="Johnson J."/>
            <person name="Steglich C."/>
            <person name="Church G.M."/>
            <person name="Richardson P."/>
            <person name="Chisholm S.W."/>
        </authorList>
    </citation>
    <scope>NUCLEOTIDE SEQUENCE [LARGE SCALE GENOMIC DNA]</scope>
    <source>
        <strain>AS9601</strain>
    </source>
</reference>
<name>RS11_PROMS</name>
<gene>
    <name evidence="1" type="primary">rpsK</name>
    <name evidence="1" type="synonym">rps11</name>
    <name type="ordered locus">A9601_17441</name>
</gene>
<dbReference type="EMBL" id="CP000551">
    <property type="protein sequence ID" value="ABM71027.1"/>
    <property type="molecule type" value="Genomic_DNA"/>
</dbReference>
<dbReference type="RefSeq" id="WP_002805825.1">
    <property type="nucleotide sequence ID" value="NC_008816.1"/>
</dbReference>
<dbReference type="SMR" id="A2BTB6"/>
<dbReference type="STRING" id="146891.A9601_17441"/>
<dbReference type="KEGG" id="pmb:A9601_17441"/>
<dbReference type="eggNOG" id="COG0100">
    <property type="taxonomic scope" value="Bacteria"/>
</dbReference>
<dbReference type="HOGENOM" id="CLU_072439_5_0_3"/>
<dbReference type="OrthoDB" id="9806415at2"/>
<dbReference type="Proteomes" id="UP000002590">
    <property type="component" value="Chromosome"/>
</dbReference>
<dbReference type="GO" id="GO:1990904">
    <property type="term" value="C:ribonucleoprotein complex"/>
    <property type="evidence" value="ECO:0007669"/>
    <property type="project" value="UniProtKB-KW"/>
</dbReference>
<dbReference type="GO" id="GO:0005840">
    <property type="term" value="C:ribosome"/>
    <property type="evidence" value="ECO:0007669"/>
    <property type="project" value="UniProtKB-KW"/>
</dbReference>
<dbReference type="GO" id="GO:0019843">
    <property type="term" value="F:rRNA binding"/>
    <property type="evidence" value="ECO:0007669"/>
    <property type="project" value="UniProtKB-UniRule"/>
</dbReference>
<dbReference type="GO" id="GO:0003735">
    <property type="term" value="F:structural constituent of ribosome"/>
    <property type="evidence" value="ECO:0007669"/>
    <property type="project" value="InterPro"/>
</dbReference>
<dbReference type="GO" id="GO:0006412">
    <property type="term" value="P:translation"/>
    <property type="evidence" value="ECO:0007669"/>
    <property type="project" value="UniProtKB-UniRule"/>
</dbReference>
<dbReference type="FunFam" id="3.30.420.80:FF:000001">
    <property type="entry name" value="30S ribosomal protein S11"/>
    <property type="match status" value="1"/>
</dbReference>
<dbReference type="Gene3D" id="3.30.420.80">
    <property type="entry name" value="Ribosomal protein S11"/>
    <property type="match status" value="1"/>
</dbReference>
<dbReference type="HAMAP" id="MF_01310">
    <property type="entry name" value="Ribosomal_uS11"/>
    <property type="match status" value="1"/>
</dbReference>
<dbReference type="InterPro" id="IPR001971">
    <property type="entry name" value="Ribosomal_uS11"/>
</dbReference>
<dbReference type="InterPro" id="IPR019981">
    <property type="entry name" value="Ribosomal_uS11_bac-type"/>
</dbReference>
<dbReference type="InterPro" id="IPR018102">
    <property type="entry name" value="Ribosomal_uS11_CS"/>
</dbReference>
<dbReference type="InterPro" id="IPR036967">
    <property type="entry name" value="Ribosomal_uS11_sf"/>
</dbReference>
<dbReference type="NCBIfam" id="NF003698">
    <property type="entry name" value="PRK05309.1"/>
    <property type="match status" value="1"/>
</dbReference>
<dbReference type="NCBIfam" id="TIGR03632">
    <property type="entry name" value="uS11_bact"/>
    <property type="match status" value="1"/>
</dbReference>
<dbReference type="PANTHER" id="PTHR11759">
    <property type="entry name" value="40S RIBOSOMAL PROTEIN S14/30S RIBOSOMAL PROTEIN S11"/>
    <property type="match status" value="1"/>
</dbReference>
<dbReference type="Pfam" id="PF00411">
    <property type="entry name" value="Ribosomal_S11"/>
    <property type="match status" value="1"/>
</dbReference>
<dbReference type="PIRSF" id="PIRSF002131">
    <property type="entry name" value="Ribosomal_S11"/>
    <property type="match status" value="1"/>
</dbReference>
<dbReference type="SUPFAM" id="SSF53137">
    <property type="entry name" value="Translational machinery components"/>
    <property type="match status" value="1"/>
</dbReference>
<dbReference type="PROSITE" id="PS00054">
    <property type="entry name" value="RIBOSOMAL_S11"/>
    <property type="match status" value="1"/>
</dbReference>
<keyword id="KW-0687">Ribonucleoprotein</keyword>
<keyword id="KW-0689">Ribosomal protein</keyword>
<keyword id="KW-0694">RNA-binding</keyword>
<keyword id="KW-0699">rRNA-binding</keyword>
<evidence type="ECO:0000255" key="1">
    <source>
        <dbReference type="HAMAP-Rule" id="MF_01310"/>
    </source>
</evidence>
<evidence type="ECO:0000305" key="2"/>
<accession>A2BTB6</accession>